<sequence length="152" mass="15594">MALVSLKLQWADGADTSVPLPAYETSGAAGADIRANCPDGPVTLAPGARALVPTGLRMAIPQGYEVQIRPRSGLALRHGITLVNSPGTIDSDYRGAVGVIMQNLGDAAFEITHGMRIAQMVVAPVVQASFELSDSLSETDRGSGGFGSTGGD</sequence>
<proteinExistence type="inferred from homology"/>
<feature type="chain" id="PRO_1000015510" description="Deoxyuridine 5'-triphosphate nucleotidohydrolase">
    <location>
        <begin position="1"/>
        <end position="152"/>
    </location>
</feature>
<feature type="binding site" evidence="1">
    <location>
        <begin position="71"/>
        <end position="73"/>
    </location>
    <ligand>
        <name>substrate</name>
    </ligand>
</feature>
<feature type="binding site" evidence="1">
    <location>
        <position position="84"/>
    </location>
    <ligand>
        <name>substrate</name>
    </ligand>
</feature>
<feature type="binding site" evidence="1">
    <location>
        <begin position="88"/>
        <end position="90"/>
    </location>
    <ligand>
        <name>substrate</name>
    </ligand>
</feature>
<gene>
    <name evidence="1" type="primary">dut</name>
    <name type="ordered locus">RD1_1201</name>
</gene>
<accession>Q16AZ3</accession>
<organism>
    <name type="scientific">Roseobacter denitrificans (strain ATCC 33942 / OCh 114)</name>
    <name type="common">Erythrobacter sp. (strain OCh 114)</name>
    <name type="synonym">Roseobacter denitrificans</name>
    <dbReference type="NCBI Taxonomy" id="375451"/>
    <lineage>
        <taxon>Bacteria</taxon>
        <taxon>Pseudomonadati</taxon>
        <taxon>Pseudomonadota</taxon>
        <taxon>Alphaproteobacteria</taxon>
        <taxon>Rhodobacterales</taxon>
        <taxon>Roseobacteraceae</taxon>
        <taxon>Roseobacter</taxon>
    </lineage>
</organism>
<name>DUT_ROSDO</name>
<protein>
    <recommendedName>
        <fullName evidence="1">Deoxyuridine 5'-triphosphate nucleotidohydrolase</fullName>
        <shortName evidence="1">dUTPase</shortName>
        <ecNumber evidence="1">3.6.1.23</ecNumber>
    </recommendedName>
    <alternativeName>
        <fullName evidence="1">dUTP pyrophosphatase</fullName>
    </alternativeName>
</protein>
<keyword id="KW-0378">Hydrolase</keyword>
<keyword id="KW-0460">Magnesium</keyword>
<keyword id="KW-0479">Metal-binding</keyword>
<keyword id="KW-0546">Nucleotide metabolism</keyword>
<keyword id="KW-1185">Reference proteome</keyword>
<comment type="function">
    <text evidence="1">This enzyme is involved in nucleotide metabolism: it produces dUMP, the immediate precursor of thymidine nucleotides and it decreases the intracellular concentration of dUTP so that uracil cannot be incorporated into DNA.</text>
</comment>
<comment type="catalytic activity">
    <reaction evidence="1">
        <text>dUTP + H2O = dUMP + diphosphate + H(+)</text>
        <dbReference type="Rhea" id="RHEA:10248"/>
        <dbReference type="ChEBI" id="CHEBI:15377"/>
        <dbReference type="ChEBI" id="CHEBI:15378"/>
        <dbReference type="ChEBI" id="CHEBI:33019"/>
        <dbReference type="ChEBI" id="CHEBI:61555"/>
        <dbReference type="ChEBI" id="CHEBI:246422"/>
        <dbReference type="EC" id="3.6.1.23"/>
    </reaction>
</comment>
<comment type="cofactor">
    <cofactor evidence="1">
        <name>Mg(2+)</name>
        <dbReference type="ChEBI" id="CHEBI:18420"/>
    </cofactor>
</comment>
<comment type="pathway">
    <text evidence="1">Pyrimidine metabolism; dUMP biosynthesis; dUMP from dCTP (dUTP route): step 2/2.</text>
</comment>
<comment type="similarity">
    <text evidence="1">Belongs to the dUTPase family.</text>
</comment>
<reference key="1">
    <citation type="journal article" date="2007" name="J. Bacteriol.">
        <title>The complete genome sequence of Roseobacter denitrificans reveals a mixotrophic rather than photosynthetic metabolism.</title>
        <authorList>
            <person name="Swingley W.D."/>
            <person name="Sadekar S."/>
            <person name="Mastrian S.D."/>
            <person name="Matthies H.J."/>
            <person name="Hao J."/>
            <person name="Ramos H."/>
            <person name="Acharya C.R."/>
            <person name="Conrad A.L."/>
            <person name="Taylor H.L."/>
            <person name="Dejesa L.C."/>
            <person name="Shah M.K."/>
            <person name="O'Huallachain M.E."/>
            <person name="Lince M.T."/>
            <person name="Blankenship R.E."/>
            <person name="Beatty J.T."/>
            <person name="Touchman J.W."/>
        </authorList>
    </citation>
    <scope>NUCLEOTIDE SEQUENCE [LARGE SCALE GENOMIC DNA]</scope>
    <source>
        <strain>ATCC 33942 / OCh 114</strain>
    </source>
</reference>
<dbReference type="EC" id="3.6.1.23" evidence="1"/>
<dbReference type="EMBL" id="CP000362">
    <property type="protein sequence ID" value="ABG30850.1"/>
    <property type="molecule type" value="Genomic_DNA"/>
</dbReference>
<dbReference type="SMR" id="Q16AZ3"/>
<dbReference type="STRING" id="375451.RD1_1201"/>
<dbReference type="KEGG" id="rde:RD1_1201"/>
<dbReference type="eggNOG" id="COG0756">
    <property type="taxonomic scope" value="Bacteria"/>
</dbReference>
<dbReference type="HOGENOM" id="CLU_068508_1_2_5"/>
<dbReference type="UniPathway" id="UPA00610">
    <property type="reaction ID" value="UER00666"/>
</dbReference>
<dbReference type="Proteomes" id="UP000007029">
    <property type="component" value="Chromosome"/>
</dbReference>
<dbReference type="GO" id="GO:0004170">
    <property type="term" value="F:dUTP diphosphatase activity"/>
    <property type="evidence" value="ECO:0007669"/>
    <property type="project" value="UniProtKB-UniRule"/>
</dbReference>
<dbReference type="GO" id="GO:0000287">
    <property type="term" value="F:magnesium ion binding"/>
    <property type="evidence" value="ECO:0007669"/>
    <property type="project" value="UniProtKB-UniRule"/>
</dbReference>
<dbReference type="GO" id="GO:0006226">
    <property type="term" value="P:dUMP biosynthetic process"/>
    <property type="evidence" value="ECO:0007669"/>
    <property type="project" value="UniProtKB-UniRule"/>
</dbReference>
<dbReference type="GO" id="GO:0046081">
    <property type="term" value="P:dUTP catabolic process"/>
    <property type="evidence" value="ECO:0007669"/>
    <property type="project" value="InterPro"/>
</dbReference>
<dbReference type="CDD" id="cd07557">
    <property type="entry name" value="trimeric_dUTPase"/>
    <property type="match status" value="1"/>
</dbReference>
<dbReference type="FunFam" id="2.70.40.10:FF:000002">
    <property type="entry name" value="dUTP diphosphatase"/>
    <property type="match status" value="1"/>
</dbReference>
<dbReference type="Gene3D" id="2.70.40.10">
    <property type="match status" value="1"/>
</dbReference>
<dbReference type="HAMAP" id="MF_00116">
    <property type="entry name" value="dUTPase_bact"/>
    <property type="match status" value="1"/>
</dbReference>
<dbReference type="InterPro" id="IPR008181">
    <property type="entry name" value="dUTPase"/>
</dbReference>
<dbReference type="InterPro" id="IPR029054">
    <property type="entry name" value="dUTPase-like"/>
</dbReference>
<dbReference type="InterPro" id="IPR036157">
    <property type="entry name" value="dUTPase-like_sf"/>
</dbReference>
<dbReference type="InterPro" id="IPR033704">
    <property type="entry name" value="dUTPase_trimeric"/>
</dbReference>
<dbReference type="NCBIfam" id="TIGR00576">
    <property type="entry name" value="dut"/>
    <property type="match status" value="1"/>
</dbReference>
<dbReference type="NCBIfam" id="NF001862">
    <property type="entry name" value="PRK00601.1"/>
    <property type="match status" value="1"/>
</dbReference>
<dbReference type="PANTHER" id="PTHR11241">
    <property type="entry name" value="DEOXYURIDINE 5'-TRIPHOSPHATE NUCLEOTIDOHYDROLASE"/>
    <property type="match status" value="1"/>
</dbReference>
<dbReference type="PANTHER" id="PTHR11241:SF0">
    <property type="entry name" value="DEOXYURIDINE 5'-TRIPHOSPHATE NUCLEOTIDOHYDROLASE"/>
    <property type="match status" value="1"/>
</dbReference>
<dbReference type="Pfam" id="PF00692">
    <property type="entry name" value="dUTPase"/>
    <property type="match status" value="1"/>
</dbReference>
<dbReference type="SUPFAM" id="SSF51283">
    <property type="entry name" value="dUTPase-like"/>
    <property type="match status" value="1"/>
</dbReference>
<evidence type="ECO:0000255" key="1">
    <source>
        <dbReference type="HAMAP-Rule" id="MF_00116"/>
    </source>
</evidence>